<sequence length="88" mass="10145">MSLLDYFRSNKKQNTAQLAKERLQIIVAHERSSRGGPDYLPQLKQDLLDVIRKYVQIDPDKITVQLDKKSDELSVLELNITFADDKKG</sequence>
<gene>
    <name evidence="1" type="primary">minE</name>
    <name type="ordered locus">ASA_2169</name>
</gene>
<name>MINE_AERS4</name>
<accession>A4SMW2</accession>
<evidence type="ECO:0000255" key="1">
    <source>
        <dbReference type="HAMAP-Rule" id="MF_00262"/>
    </source>
</evidence>
<protein>
    <recommendedName>
        <fullName evidence="1">Cell division topological specificity factor</fullName>
    </recommendedName>
</protein>
<reference key="1">
    <citation type="journal article" date="2008" name="BMC Genomics">
        <title>The genome of Aeromonas salmonicida subsp. salmonicida A449: insights into the evolution of a fish pathogen.</title>
        <authorList>
            <person name="Reith M.E."/>
            <person name="Singh R.K."/>
            <person name="Curtis B."/>
            <person name="Boyd J.M."/>
            <person name="Bouevitch A."/>
            <person name="Kimball J."/>
            <person name="Munholland J."/>
            <person name="Murphy C."/>
            <person name="Sarty D."/>
            <person name="Williams J."/>
            <person name="Nash J.H."/>
            <person name="Johnson S.C."/>
            <person name="Brown L.L."/>
        </authorList>
    </citation>
    <scope>NUCLEOTIDE SEQUENCE [LARGE SCALE GENOMIC DNA]</scope>
    <source>
        <strain>A449</strain>
    </source>
</reference>
<dbReference type="EMBL" id="CP000644">
    <property type="protein sequence ID" value="ABO90234.1"/>
    <property type="molecule type" value="Genomic_DNA"/>
</dbReference>
<dbReference type="RefSeq" id="WP_005311265.1">
    <property type="nucleotide sequence ID" value="NC_009348.1"/>
</dbReference>
<dbReference type="SMR" id="A4SMW2"/>
<dbReference type="STRING" id="29491.GCA_000820065_00438"/>
<dbReference type="GeneID" id="92723598"/>
<dbReference type="KEGG" id="asa:ASA_2169"/>
<dbReference type="eggNOG" id="COG0851">
    <property type="taxonomic scope" value="Bacteria"/>
</dbReference>
<dbReference type="HOGENOM" id="CLU_137929_2_2_6"/>
<dbReference type="Proteomes" id="UP000000225">
    <property type="component" value="Chromosome"/>
</dbReference>
<dbReference type="GO" id="GO:0051301">
    <property type="term" value="P:cell division"/>
    <property type="evidence" value="ECO:0007669"/>
    <property type="project" value="UniProtKB-KW"/>
</dbReference>
<dbReference type="GO" id="GO:0032955">
    <property type="term" value="P:regulation of division septum assembly"/>
    <property type="evidence" value="ECO:0007669"/>
    <property type="project" value="InterPro"/>
</dbReference>
<dbReference type="FunFam" id="3.30.1070.10:FF:000001">
    <property type="entry name" value="Cell division topological specificity factor"/>
    <property type="match status" value="1"/>
</dbReference>
<dbReference type="Gene3D" id="3.30.1070.10">
    <property type="entry name" value="Cell division topological specificity factor MinE"/>
    <property type="match status" value="1"/>
</dbReference>
<dbReference type="HAMAP" id="MF_00262">
    <property type="entry name" value="MinE"/>
    <property type="match status" value="1"/>
</dbReference>
<dbReference type="InterPro" id="IPR005527">
    <property type="entry name" value="MinE"/>
</dbReference>
<dbReference type="InterPro" id="IPR036707">
    <property type="entry name" value="MinE_sf"/>
</dbReference>
<dbReference type="NCBIfam" id="TIGR01215">
    <property type="entry name" value="minE"/>
    <property type="match status" value="1"/>
</dbReference>
<dbReference type="NCBIfam" id="NF001422">
    <property type="entry name" value="PRK00296.1"/>
    <property type="match status" value="1"/>
</dbReference>
<dbReference type="Pfam" id="PF03776">
    <property type="entry name" value="MinE"/>
    <property type="match status" value="1"/>
</dbReference>
<dbReference type="SUPFAM" id="SSF55229">
    <property type="entry name" value="Cell division protein MinE topological specificity domain"/>
    <property type="match status" value="1"/>
</dbReference>
<keyword id="KW-0131">Cell cycle</keyword>
<keyword id="KW-0132">Cell division</keyword>
<organism>
    <name type="scientific">Aeromonas salmonicida (strain A449)</name>
    <dbReference type="NCBI Taxonomy" id="382245"/>
    <lineage>
        <taxon>Bacteria</taxon>
        <taxon>Pseudomonadati</taxon>
        <taxon>Pseudomonadota</taxon>
        <taxon>Gammaproteobacteria</taxon>
        <taxon>Aeromonadales</taxon>
        <taxon>Aeromonadaceae</taxon>
        <taxon>Aeromonas</taxon>
    </lineage>
</organism>
<proteinExistence type="inferred from homology"/>
<comment type="function">
    <text evidence="1">Prevents the cell division inhibition by proteins MinC and MinD at internal division sites while permitting inhibition at polar sites. This ensures cell division at the proper site by restricting the formation of a division septum at the midpoint of the long axis of the cell.</text>
</comment>
<comment type="similarity">
    <text evidence="1">Belongs to the MinE family.</text>
</comment>
<feature type="chain" id="PRO_0000298066" description="Cell division topological specificity factor">
    <location>
        <begin position="1"/>
        <end position="88"/>
    </location>
</feature>